<protein>
    <recommendedName>
        <fullName>N,N'-diacetyllegionaminic acid synthase</fullName>
        <ecNumber>2.5.1.101</ecNumber>
    </recommendedName>
</protein>
<sequence>MGSNRKINGIKPRGSSMTCFIIAEAGVNHNGDLQLAKELVYAAKESGADAVKFQTFKADTLVNKTVEKAEYQKNNAPESSTQYEMLKALELSEEDHYLLSELANSLGIEFMSTGFDEQSIDFLISLGVKRLKIPSGEITNVPYLQHCASKKLPLIISTGMCDLQEVRVAIDTVKPYYGNSLSDYLVLLHCTSNYPASYQDVNLKAMQTLADEFQLPVGYSDHTLGILVPTLAVGMGACVIEKHFTMDKSLPGPDHLASMDPEEMKNLVQSIRDAETVLGSGEKKPSDNELPIRALVRRSITLRRDLVKGAQISKEDLILLRPGTGIAPSEISNIVGSRLSMNLSAGTTLLWEHIEA</sequence>
<proteinExistence type="evidence at protein level"/>
<reference key="1">
    <citation type="journal article" date="2004" name="Science">
        <title>The genomic sequence of the accidental pathogen Legionella pneumophila.</title>
        <authorList>
            <person name="Chien M."/>
            <person name="Morozova I."/>
            <person name="Shi S."/>
            <person name="Sheng H."/>
            <person name="Chen J."/>
            <person name="Gomez S.M."/>
            <person name="Asamani G."/>
            <person name="Hill K."/>
            <person name="Nuara J."/>
            <person name="Feder M."/>
            <person name="Rineer J."/>
            <person name="Greenberg J.J."/>
            <person name="Steshenko V."/>
            <person name="Park S.H."/>
            <person name="Zhao B."/>
            <person name="Teplitskaya E."/>
            <person name="Edwards J.R."/>
            <person name="Pampou S."/>
            <person name="Georghiou A."/>
            <person name="Chou I.-C."/>
            <person name="Iannuccilli W."/>
            <person name="Ulz M.E."/>
            <person name="Kim D.H."/>
            <person name="Geringer-Sameth A."/>
            <person name="Goldsberry C."/>
            <person name="Morozov P."/>
            <person name="Fischer S.G."/>
            <person name="Segal G."/>
            <person name="Qu X."/>
            <person name="Rzhetsky A."/>
            <person name="Zhang P."/>
            <person name="Cayanis E."/>
            <person name="De Jong P.J."/>
            <person name="Ju J."/>
            <person name="Kalachikov S."/>
            <person name="Shuman H.A."/>
            <person name="Russo J.J."/>
        </authorList>
    </citation>
    <scope>NUCLEOTIDE SEQUENCE [LARGE SCALE GENOMIC DNA]</scope>
    <source>
        <strain>Philadelphia 1 / ATCC 33152 / DSM 7513</strain>
    </source>
</reference>
<reference key="2">
    <citation type="journal article" date="2008" name="Biochemistry">
        <title>Biosynthesis of CMP-N,N'-diacetyllegionaminic acid from UDP-N,N'-diacetylbacillosamine in Legionella pneumophila.</title>
        <authorList>
            <person name="Glaze P.A."/>
            <person name="Watson D.C."/>
            <person name="Young N.M."/>
            <person name="Tanner M.E."/>
        </authorList>
    </citation>
    <scope>FUNCTION</scope>
    <scope>CATALYTIC ACTIVITY</scope>
    <scope>REACTION MECHANISM</scope>
    <source>
        <strain>Philadelphia 1 / ATCC 33152 / DSM 7513</strain>
    </source>
</reference>
<evidence type="ECO:0000255" key="1">
    <source>
        <dbReference type="PROSITE-ProRule" id="PRU00021"/>
    </source>
</evidence>
<evidence type="ECO:0000269" key="2">
    <source>
    </source>
</evidence>
<organism>
    <name type="scientific">Legionella pneumophila subsp. pneumophila (strain Philadelphia 1 / ATCC 33152 / DSM 7513)</name>
    <dbReference type="NCBI Taxonomy" id="272624"/>
    <lineage>
        <taxon>Bacteria</taxon>
        <taxon>Pseudomonadati</taxon>
        <taxon>Pseudomonadota</taxon>
        <taxon>Gammaproteobacteria</taxon>
        <taxon>Legionellales</taxon>
        <taxon>Legionellaceae</taxon>
        <taxon>Legionella</taxon>
    </lineage>
</organism>
<dbReference type="EC" id="2.5.1.101"/>
<dbReference type="EMBL" id="AE017354">
    <property type="protein sequence ID" value="AAU26841.1"/>
    <property type="molecule type" value="Genomic_DNA"/>
</dbReference>
<dbReference type="RefSeq" id="YP_094788.1">
    <property type="nucleotide sequence ID" value="NC_002942.5"/>
</dbReference>
<dbReference type="SMR" id="Q5ZXH9"/>
<dbReference type="STRING" id="272624.lpg0752"/>
<dbReference type="PaxDb" id="272624-lpg0752"/>
<dbReference type="KEGG" id="lpn:lpg0752"/>
<dbReference type="PATRIC" id="fig|272624.6.peg.777"/>
<dbReference type="eggNOG" id="COG2089">
    <property type="taxonomic scope" value="Bacteria"/>
</dbReference>
<dbReference type="HOGENOM" id="CLU_040465_0_0_6"/>
<dbReference type="OrthoDB" id="9781701at2"/>
<dbReference type="BioCyc" id="MetaCyc:MONOMER-17729"/>
<dbReference type="Proteomes" id="UP000000609">
    <property type="component" value="Chromosome"/>
</dbReference>
<dbReference type="GO" id="GO:0016829">
    <property type="term" value="F:lyase activity"/>
    <property type="evidence" value="ECO:0007669"/>
    <property type="project" value="UniProtKB-KW"/>
</dbReference>
<dbReference type="GO" id="GO:0047444">
    <property type="term" value="F:N-acylneuraminate-9-phosphate synthase activity"/>
    <property type="evidence" value="ECO:0007669"/>
    <property type="project" value="TreeGrafter"/>
</dbReference>
<dbReference type="GO" id="GO:0016765">
    <property type="term" value="F:transferase activity, transferring alkyl or aryl (other than methyl) groups"/>
    <property type="evidence" value="ECO:0000314"/>
    <property type="project" value="UniProtKB"/>
</dbReference>
<dbReference type="GO" id="GO:0016051">
    <property type="term" value="P:carbohydrate biosynthetic process"/>
    <property type="evidence" value="ECO:0000314"/>
    <property type="project" value="UniProtKB"/>
</dbReference>
<dbReference type="GO" id="GO:0070085">
    <property type="term" value="P:glycosylation"/>
    <property type="evidence" value="ECO:0007669"/>
    <property type="project" value="TreeGrafter"/>
</dbReference>
<dbReference type="CDD" id="cd11615">
    <property type="entry name" value="SAF_NeuB_like"/>
    <property type="match status" value="1"/>
</dbReference>
<dbReference type="Gene3D" id="3.20.20.70">
    <property type="entry name" value="Aldolase class I"/>
    <property type="match status" value="1"/>
</dbReference>
<dbReference type="Gene3D" id="3.90.1210.10">
    <property type="entry name" value="Antifreeze-like/N-acetylneuraminic acid synthase C-terminal domain"/>
    <property type="match status" value="1"/>
</dbReference>
<dbReference type="InterPro" id="IPR006190">
    <property type="entry name" value="AFP_Neu5c_C"/>
</dbReference>
<dbReference type="InterPro" id="IPR036732">
    <property type="entry name" value="AFP_Neu5c_C_sf"/>
</dbReference>
<dbReference type="InterPro" id="IPR013785">
    <property type="entry name" value="Aldolase_TIM"/>
</dbReference>
<dbReference type="InterPro" id="IPR020007">
    <property type="entry name" value="N-AcNeuraminate_synthase"/>
</dbReference>
<dbReference type="InterPro" id="IPR013132">
    <property type="entry name" value="Neu5Ac_N"/>
</dbReference>
<dbReference type="InterPro" id="IPR051690">
    <property type="entry name" value="Nonulosonic_Acid_Synth"/>
</dbReference>
<dbReference type="InterPro" id="IPR013974">
    <property type="entry name" value="SAF"/>
</dbReference>
<dbReference type="NCBIfam" id="TIGR03569">
    <property type="entry name" value="NeuB_NnaB"/>
    <property type="match status" value="1"/>
</dbReference>
<dbReference type="PANTHER" id="PTHR42966">
    <property type="entry name" value="N-ACETYLNEURAMINATE SYNTHASE"/>
    <property type="match status" value="1"/>
</dbReference>
<dbReference type="PANTHER" id="PTHR42966:SF1">
    <property type="entry name" value="SIALIC ACID SYNTHASE"/>
    <property type="match status" value="1"/>
</dbReference>
<dbReference type="Pfam" id="PF03102">
    <property type="entry name" value="NeuB"/>
    <property type="match status" value="1"/>
</dbReference>
<dbReference type="Pfam" id="PF08666">
    <property type="entry name" value="SAF"/>
    <property type="match status" value="1"/>
</dbReference>
<dbReference type="SMART" id="SM00858">
    <property type="entry name" value="SAF"/>
    <property type="match status" value="1"/>
</dbReference>
<dbReference type="SUPFAM" id="SSF51269">
    <property type="entry name" value="AFP III-like domain"/>
    <property type="match status" value="1"/>
</dbReference>
<dbReference type="SUPFAM" id="SSF51569">
    <property type="entry name" value="Aldolase"/>
    <property type="match status" value="1"/>
</dbReference>
<dbReference type="PROSITE" id="PS50844">
    <property type="entry name" value="AFP_LIKE"/>
    <property type="match status" value="1"/>
</dbReference>
<comment type="function">
    <text evidence="2">Involved in biosynthesis of legionaminic acid (5,7-diamino-3,5,7,9-tetradeoxy-D-glycero-D-galacto-non-2-ulosonic acid)(Leg), a sialic acid-like derivative that is incorporated into virulence-associated cell surface glycoconjugates such as lipopolysaccharide (LPS) which could be a key determinant in the ability of L.pneumophila to inhibit the fusion of phagosomes with lysosomes. LPS contains a majority alpha2,4-linked homomer of legionaminic acid. Catalyzes the condensation of 2,4-diacetamido-2,4,6-trideoxymannose with phosphoenolpyruvate (PEP) to give N,N'-diacetyllegionaminic acid.</text>
</comment>
<comment type="catalytic activity">
    <reaction evidence="2">
        <text>2,4-diacetamido-2,4,6-trideoxy-alpha-D-mannopyranose + phosphoenolpyruvate + H2O = N,N-diacetyllegionaminate + phosphate</text>
        <dbReference type="Rhea" id="RHEA:34507"/>
        <dbReference type="ChEBI" id="CHEBI:15377"/>
        <dbReference type="ChEBI" id="CHEBI:43474"/>
        <dbReference type="ChEBI" id="CHEBI:58702"/>
        <dbReference type="ChEBI" id="CHEBI:68645"/>
        <dbReference type="ChEBI" id="CHEBI:68669"/>
        <dbReference type="EC" id="2.5.1.101"/>
    </reaction>
</comment>
<feature type="chain" id="PRO_0000424188" description="N,N'-diacetyllegionaminic acid synthase">
    <location>
        <begin position="1"/>
        <end position="356"/>
    </location>
</feature>
<feature type="domain" description="AFP-like" evidence="1">
    <location>
        <begin position="299"/>
        <end position="356"/>
    </location>
</feature>
<gene>
    <name type="primary">neuB</name>
    <name type="ordered locus">lpg0752</name>
</gene>
<accession>Q5ZXH9</accession>
<keyword id="KW-0456">Lyase</keyword>
<keyword id="KW-1185">Reference proteome</keyword>
<keyword id="KW-0808">Transferase</keyword>
<keyword id="KW-0843">Virulence</keyword>
<name>NEUBH_LEGPH</name>